<keyword id="KW-0694">RNA-binding</keyword>
<keyword id="KW-0804">Transcription</keyword>
<keyword id="KW-0889">Transcription antitermination</keyword>
<keyword id="KW-0805">Transcription regulation</keyword>
<organism>
    <name type="scientific">Staphylococcus aureus (strain Newman)</name>
    <dbReference type="NCBI Taxonomy" id="426430"/>
    <lineage>
        <taxon>Bacteria</taxon>
        <taxon>Bacillati</taxon>
        <taxon>Bacillota</taxon>
        <taxon>Bacilli</taxon>
        <taxon>Bacillales</taxon>
        <taxon>Staphylococcaceae</taxon>
        <taxon>Staphylococcus</taxon>
    </lineage>
</organism>
<evidence type="ECO:0000255" key="1">
    <source>
        <dbReference type="HAMAP-Rule" id="MF_00073"/>
    </source>
</evidence>
<accession>A6QH69</accession>
<feature type="chain" id="PRO_1000071193" description="Transcription antitermination protein NusB">
    <location>
        <begin position="1"/>
        <end position="129"/>
    </location>
</feature>
<name>NUSB_STAAE</name>
<proteinExistence type="inferred from homology"/>
<gene>
    <name evidence="1" type="primary">nusB</name>
    <name type="ordered locus">NWMN_1429</name>
</gene>
<reference key="1">
    <citation type="journal article" date="2008" name="J. Bacteriol.">
        <title>Genome sequence of Staphylococcus aureus strain Newman and comparative analysis of staphylococcal genomes: polymorphism and evolution of two major pathogenicity islands.</title>
        <authorList>
            <person name="Baba T."/>
            <person name="Bae T."/>
            <person name="Schneewind O."/>
            <person name="Takeuchi F."/>
            <person name="Hiramatsu K."/>
        </authorList>
    </citation>
    <scope>NUCLEOTIDE SEQUENCE [LARGE SCALE GENOMIC DNA]</scope>
    <source>
        <strain>Newman</strain>
    </source>
</reference>
<comment type="function">
    <text evidence="1">Involved in transcription antitermination. Required for transcription of ribosomal RNA (rRNA) genes. Binds specifically to the boxA antiterminator sequence of the ribosomal RNA (rrn) operons.</text>
</comment>
<comment type="similarity">
    <text evidence="1">Belongs to the NusB family.</text>
</comment>
<dbReference type="EMBL" id="AP009351">
    <property type="protein sequence ID" value="BAF67701.1"/>
    <property type="molecule type" value="Genomic_DNA"/>
</dbReference>
<dbReference type="RefSeq" id="WP_000087385.1">
    <property type="nucleotide sequence ID" value="NZ_JBBIAE010000001.1"/>
</dbReference>
<dbReference type="SMR" id="A6QH69"/>
<dbReference type="KEGG" id="sae:NWMN_1429"/>
<dbReference type="HOGENOM" id="CLU_087843_3_3_9"/>
<dbReference type="Proteomes" id="UP000006386">
    <property type="component" value="Chromosome"/>
</dbReference>
<dbReference type="GO" id="GO:0005829">
    <property type="term" value="C:cytosol"/>
    <property type="evidence" value="ECO:0007669"/>
    <property type="project" value="TreeGrafter"/>
</dbReference>
<dbReference type="GO" id="GO:0003723">
    <property type="term" value="F:RNA binding"/>
    <property type="evidence" value="ECO:0007669"/>
    <property type="project" value="UniProtKB-UniRule"/>
</dbReference>
<dbReference type="GO" id="GO:0006353">
    <property type="term" value="P:DNA-templated transcription termination"/>
    <property type="evidence" value="ECO:0007669"/>
    <property type="project" value="UniProtKB-UniRule"/>
</dbReference>
<dbReference type="GO" id="GO:0031564">
    <property type="term" value="P:transcription antitermination"/>
    <property type="evidence" value="ECO:0007669"/>
    <property type="project" value="UniProtKB-KW"/>
</dbReference>
<dbReference type="FunFam" id="1.10.940.10:FF:000011">
    <property type="entry name" value="Transcription antitermination protein NusB"/>
    <property type="match status" value="1"/>
</dbReference>
<dbReference type="Gene3D" id="1.10.940.10">
    <property type="entry name" value="NusB-like"/>
    <property type="match status" value="1"/>
</dbReference>
<dbReference type="HAMAP" id="MF_00073">
    <property type="entry name" value="NusB"/>
    <property type="match status" value="1"/>
</dbReference>
<dbReference type="InterPro" id="IPR035926">
    <property type="entry name" value="NusB-like_sf"/>
</dbReference>
<dbReference type="InterPro" id="IPR011605">
    <property type="entry name" value="NusB_fam"/>
</dbReference>
<dbReference type="InterPro" id="IPR006027">
    <property type="entry name" value="NusB_RsmB_TIM44"/>
</dbReference>
<dbReference type="NCBIfam" id="TIGR01951">
    <property type="entry name" value="nusB"/>
    <property type="match status" value="1"/>
</dbReference>
<dbReference type="PANTHER" id="PTHR11078:SF3">
    <property type="entry name" value="ANTITERMINATION NUSB DOMAIN-CONTAINING PROTEIN"/>
    <property type="match status" value="1"/>
</dbReference>
<dbReference type="PANTHER" id="PTHR11078">
    <property type="entry name" value="N UTILIZATION SUBSTANCE PROTEIN B-RELATED"/>
    <property type="match status" value="1"/>
</dbReference>
<dbReference type="Pfam" id="PF01029">
    <property type="entry name" value="NusB"/>
    <property type="match status" value="1"/>
</dbReference>
<dbReference type="SUPFAM" id="SSF48013">
    <property type="entry name" value="NusB-like"/>
    <property type="match status" value="1"/>
</dbReference>
<sequence length="129" mass="15061">MSRKESRVQAFQTLFQLEMKDSDLTINEAISFIKDDNPDLDFEFIHWLVSGVKDHEPVLDETISPYLKDWTIARLLKTDRIILRMATYEILHSDTPAKVVMNEAVELTKQFSDDDHYKFINGVLSNIKK</sequence>
<protein>
    <recommendedName>
        <fullName evidence="1">Transcription antitermination protein NusB</fullName>
    </recommendedName>
    <alternativeName>
        <fullName evidence="1">Antitermination factor NusB</fullName>
    </alternativeName>
</protein>